<protein>
    <recommendedName>
        <fullName evidence="2">Ornithine carbamoyltransferase</fullName>
        <shortName evidence="2">OTCase</shortName>
        <ecNumber evidence="2">2.1.3.3</ecNumber>
    </recommendedName>
</protein>
<comment type="function">
    <text evidence="1">Reversibly catalyzes the transfer of the carbamoyl group from carbamoyl phosphate (CP) to the N(epsilon) atom of ornithine (ORN) to produce L-citrulline.</text>
</comment>
<comment type="catalytic activity">
    <reaction evidence="2">
        <text>carbamoyl phosphate + L-ornithine = L-citrulline + phosphate + H(+)</text>
        <dbReference type="Rhea" id="RHEA:19513"/>
        <dbReference type="ChEBI" id="CHEBI:15378"/>
        <dbReference type="ChEBI" id="CHEBI:43474"/>
        <dbReference type="ChEBI" id="CHEBI:46911"/>
        <dbReference type="ChEBI" id="CHEBI:57743"/>
        <dbReference type="ChEBI" id="CHEBI:58228"/>
        <dbReference type="EC" id="2.1.3.3"/>
    </reaction>
</comment>
<comment type="pathway">
    <text evidence="2">Amino-acid biosynthesis; L-arginine biosynthesis; L-arginine from L-ornithine and carbamoyl phosphate: step 1/3.</text>
</comment>
<comment type="subcellular location">
    <subcellularLocation>
        <location evidence="2">Cytoplasm</location>
    </subcellularLocation>
</comment>
<comment type="similarity">
    <text evidence="2">Belongs to the aspartate/ornithine carbamoyltransferase superfamily. OTCase family.</text>
</comment>
<reference key="1">
    <citation type="journal article" date="2003" name="Proc. Natl. Acad. Sci. U.S.A.">
        <title>Genome sequence of the cyanobacterium Prochlorococcus marinus SS120, a nearly minimal oxyphototrophic genome.</title>
        <authorList>
            <person name="Dufresne A."/>
            <person name="Salanoubat M."/>
            <person name="Partensky F."/>
            <person name="Artiguenave F."/>
            <person name="Axmann I.M."/>
            <person name="Barbe V."/>
            <person name="Duprat S."/>
            <person name="Galperin M.Y."/>
            <person name="Koonin E.V."/>
            <person name="Le Gall F."/>
            <person name="Makarova K.S."/>
            <person name="Ostrowski M."/>
            <person name="Oztas S."/>
            <person name="Robert C."/>
            <person name="Rogozin I.B."/>
            <person name="Scanlan D.J."/>
            <person name="Tandeau de Marsac N."/>
            <person name="Weissenbach J."/>
            <person name="Wincker P."/>
            <person name="Wolf Y.I."/>
            <person name="Hess W.R."/>
        </authorList>
    </citation>
    <scope>NUCLEOTIDE SEQUENCE [LARGE SCALE GENOMIC DNA]</scope>
    <source>
        <strain>SARG / CCMP1375 / SS120</strain>
    </source>
</reference>
<sequence>MNMNSLSVSRVLADLAGKDFISCSDFTSDQVKALLQLSSQLKNGDRRIDLGNRVLGLIFSKASTRTRVSFQVAMARLGGQTIDLSNQATQLARGEPLKDTARVLSRYCDALALRTFGNDELIEYAKWSSIPVINALTDLEHPCQALADFLTIKEAFGSLDGITLAYIGDGNNVLNSLMICGTLLGVNIQIASPKGFEPLPSIVERAKTLAHPTLKICVSNNPIDAVSGAHVIYTDVWASMGQESEQAQRKEIFEGYTVNKDLVDKAEKESIILHCLPAHRGEEITDDVLESSASRIFDQAENRLHVQQALLAALLGGL</sequence>
<evidence type="ECO:0000250" key="1"/>
<evidence type="ECO:0000255" key="2">
    <source>
        <dbReference type="HAMAP-Rule" id="MF_01109"/>
    </source>
</evidence>
<keyword id="KW-0028">Amino-acid biosynthesis</keyword>
<keyword id="KW-0055">Arginine biosynthesis</keyword>
<keyword id="KW-0963">Cytoplasm</keyword>
<keyword id="KW-1185">Reference proteome</keyword>
<keyword id="KW-0808">Transferase</keyword>
<accession>Q7VAW6</accession>
<organism>
    <name type="scientific">Prochlorococcus marinus (strain SARG / CCMP1375 / SS120)</name>
    <dbReference type="NCBI Taxonomy" id="167539"/>
    <lineage>
        <taxon>Bacteria</taxon>
        <taxon>Bacillati</taxon>
        <taxon>Cyanobacteriota</taxon>
        <taxon>Cyanophyceae</taxon>
        <taxon>Synechococcales</taxon>
        <taxon>Prochlorococcaceae</taxon>
        <taxon>Prochlorococcus</taxon>
    </lineage>
</organism>
<dbReference type="EC" id="2.1.3.3" evidence="2"/>
<dbReference type="EMBL" id="AE017126">
    <property type="protein sequence ID" value="AAQ00381.1"/>
    <property type="molecule type" value="Genomic_DNA"/>
</dbReference>
<dbReference type="RefSeq" id="NP_875728.1">
    <property type="nucleotide sequence ID" value="NC_005042.1"/>
</dbReference>
<dbReference type="RefSeq" id="WP_011125488.1">
    <property type="nucleotide sequence ID" value="NC_005042.1"/>
</dbReference>
<dbReference type="SMR" id="Q7VAW6"/>
<dbReference type="STRING" id="167539.Pro_1337"/>
<dbReference type="EnsemblBacteria" id="AAQ00381">
    <property type="protein sequence ID" value="AAQ00381"/>
    <property type="gene ID" value="Pro_1337"/>
</dbReference>
<dbReference type="KEGG" id="pma:Pro_1337"/>
<dbReference type="PATRIC" id="fig|167539.5.peg.1402"/>
<dbReference type="eggNOG" id="COG0078">
    <property type="taxonomic scope" value="Bacteria"/>
</dbReference>
<dbReference type="HOGENOM" id="CLU_043846_3_2_3"/>
<dbReference type="OrthoDB" id="9802587at2"/>
<dbReference type="UniPathway" id="UPA00068">
    <property type="reaction ID" value="UER00112"/>
</dbReference>
<dbReference type="Proteomes" id="UP000001420">
    <property type="component" value="Chromosome"/>
</dbReference>
<dbReference type="GO" id="GO:0005737">
    <property type="term" value="C:cytoplasm"/>
    <property type="evidence" value="ECO:0007669"/>
    <property type="project" value="UniProtKB-SubCell"/>
</dbReference>
<dbReference type="GO" id="GO:0016597">
    <property type="term" value="F:amino acid binding"/>
    <property type="evidence" value="ECO:0007669"/>
    <property type="project" value="InterPro"/>
</dbReference>
<dbReference type="GO" id="GO:0004585">
    <property type="term" value="F:ornithine carbamoyltransferase activity"/>
    <property type="evidence" value="ECO:0007669"/>
    <property type="project" value="UniProtKB-UniRule"/>
</dbReference>
<dbReference type="GO" id="GO:0042450">
    <property type="term" value="P:arginine biosynthetic process via ornithine"/>
    <property type="evidence" value="ECO:0007669"/>
    <property type="project" value="TreeGrafter"/>
</dbReference>
<dbReference type="GO" id="GO:0019240">
    <property type="term" value="P:citrulline biosynthetic process"/>
    <property type="evidence" value="ECO:0007669"/>
    <property type="project" value="TreeGrafter"/>
</dbReference>
<dbReference type="GO" id="GO:0006526">
    <property type="term" value="P:L-arginine biosynthetic process"/>
    <property type="evidence" value="ECO:0007669"/>
    <property type="project" value="UniProtKB-UniRule"/>
</dbReference>
<dbReference type="FunFam" id="3.40.50.1370:FF:000008">
    <property type="entry name" value="Ornithine carbamoyltransferase"/>
    <property type="match status" value="1"/>
</dbReference>
<dbReference type="Gene3D" id="3.40.50.1370">
    <property type="entry name" value="Aspartate/ornithine carbamoyltransferase"/>
    <property type="match status" value="2"/>
</dbReference>
<dbReference type="HAMAP" id="MF_01109">
    <property type="entry name" value="OTCase"/>
    <property type="match status" value="1"/>
</dbReference>
<dbReference type="InterPro" id="IPR006132">
    <property type="entry name" value="Asp/Orn_carbamoyltranf_P-bd"/>
</dbReference>
<dbReference type="InterPro" id="IPR006130">
    <property type="entry name" value="Asp/Orn_carbamoylTrfase"/>
</dbReference>
<dbReference type="InterPro" id="IPR036901">
    <property type="entry name" value="Asp/Orn_carbamoylTrfase_sf"/>
</dbReference>
<dbReference type="InterPro" id="IPR006131">
    <property type="entry name" value="Asp_carbamoyltransf_Asp/Orn-bd"/>
</dbReference>
<dbReference type="InterPro" id="IPR002292">
    <property type="entry name" value="Orn/put_carbamltrans"/>
</dbReference>
<dbReference type="InterPro" id="IPR024904">
    <property type="entry name" value="OTCase_ArgI"/>
</dbReference>
<dbReference type="NCBIfam" id="TIGR00658">
    <property type="entry name" value="orni_carb_tr"/>
    <property type="match status" value="1"/>
</dbReference>
<dbReference type="NCBIfam" id="NF001986">
    <property type="entry name" value="PRK00779.1"/>
    <property type="match status" value="1"/>
</dbReference>
<dbReference type="PANTHER" id="PTHR45753">
    <property type="entry name" value="ORNITHINE CARBAMOYLTRANSFERASE, MITOCHONDRIAL"/>
    <property type="match status" value="1"/>
</dbReference>
<dbReference type="PANTHER" id="PTHR45753:SF3">
    <property type="entry name" value="ORNITHINE TRANSCARBAMYLASE, MITOCHONDRIAL"/>
    <property type="match status" value="1"/>
</dbReference>
<dbReference type="Pfam" id="PF00185">
    <property type="entry name" value="OTCace"/>
    <property type="match status" value="1"/>
</dbReference>
<dbReference type="Pfam" id="PF02729">
    <property type="entry name" value="OTCace_N"/>
    <property type="match status" value="1"/>
</dbReference>
<dbReference type="PRINTS" id="PR00100">
    <property type="entry name" value="AOTCASE"/>
</dbReference>
<dbReference type="PRINTS" id="PR00102">
    <property type="entry name" value="OTCASE"/>
</dbReference>
<dbReference type="SUPFAM" id="SSF53671">
    <property type="entry name" value="Aspartate/ornithine carbamoyltransferase"/>
    <property type="match status" value="1"/>
</dbReference>
<dbReference type="PROSITE" id="PS00097">
    <property type="entry name" value="CARBAMOYLTRANSFERASE"/>
    <property type="match status" value="1"/>
</dbReference>
<gene>
    <name evidence="2" type="primary">argF</name>
    <name type="ordered locus">Pro_1337</name>
</gene>
<feature type="chain" id="PRO_0000112982" description="Ornithine carbamoyltransferase">
    <location>
        <begin position="1"/>
        <end position="318"/>
    </location>
</feature>
<feature type="binding site" evidence="2">
    <location>
        <begin position="63"/>
        <end position="66"/>
    </location>
    <ligand>
        <name>carbamoyl phosphate</name>
        <dbReference type="ChEBI" id="CHEBI:58228"/>
    </ligand>
</feature>
<feature type="binding site" evidence="2">
    <location>
        <position position="90"/>
    </location>
    <ligand>
        <name>carbamoyl phosphate</name>
        <dbReference type="ChEBI" id="CHEBI:58228"/>
    </ligand>
</feature>
<feature type="binding site" evidence="2">
    <location>
        <position position="114"/>
    </location>
    <ligand>
        <name>carbamoyl phosphate</name>
        <dbReference type="ChEBI" id="CHEBI:58228"/>
    </ligand>
</feature>
<feature type="binding site" evidence="2">
    <location>
        <begin position="141"/>
        <end position="144"/>
    </location>
    <ligand>
        <name>carbamoyl phosphate</name>
        <dbReference type="ChEBI" id="CHEBI:58228"/>
    </ligand>
</feature>
<feature type="binding site" evidence="2">
    <location>
        <position position="172"/>
    </location>
    <ligand>
        <name>L-ornithine</name>
        <dbReference type="ChEBI" id="CHEBI:46911"/>
    </ligand>
</feature>
<feature type="binding site" evidence="2">
    <location>
        <position position="235"/>
    </location>
    <ligand>
        <name>L-ornithine</name>
        <dbReference type="ChEBI" id="CHEBI:46911"/>
    </ligand>
</feature>
<feature type="binding site" evidence="2">
    <location>
        <begin position="239"/>
        <end position="240"/>
    </location>
    <ligand>
        <name>L-ornithine</name>
        <dbReference type="ChEBI" id="CHEBI:46911"/>
    </ligand>
</feature>
<feature type="binding site" evidence="2">
    <location>
        <begin position="275"/>
        <end position="276"/>
    </location>
    <ligand>
        <name>carbamoyl phosphate</name>
        <dbReference type="ChEBI" id="CHEBI:58228"/>
    </ligand>
</feature>
<feature type="binding site" evidence="2">
    <location>
        <position position="303"/>
    </location>
    <ligand>
        <name>carbamoyl phosphate</name>
        <dbReference type="ChEBI" id="CHEBI:58228"/>
    </ligand>
</feature>
<name>OTC_PROMA</name>
<proteinExistence type="inferred from homology"/>